<proteinExistence type="inferred from homology"/>
<reference key="1">
    <citation type="journal article" date="2008" name="J. Bacteriol.">
        <title>Insights into the environmental resistance gene pool from the genome sequence of the multidrug-resistant environmental isolate Escherichia coli SMS-3-5.</title>
        <authorList>
            <person name="Fricke W.F."/>
            <person name="Wright M.S."/>
            <person name="Lindell A.H."/>
            <person name="Harkins D.M."/>
            <person name="Baker-Austin C."/>
            <person name="Ravel J."/>
            <person name="Stepanauskas R."/>
        </authorList>
    </citation>
    <scope>NUCLEOTIDE SEQUENCE [LARGE SCALE GENOMIC DNA]</scope>
    <source>
        <strain>SMS-3-5 / SECEC</strain>
    </source>
</reference>
<name>GLGX_ECOSM</name>
<accession>B1LI92</accession>
<keyword id="KW-0119">Carbohydrate metabolism</keyword>
<keyword id="KW-0321">Glycogen metabolism</keyword>
<keyword id="KW-0326">Glycosidase</keyword>
<keyword id="KW-0378">Hydrolase</keyword>
<gene>
    <name evidence="1" type="primary">glgX</name>
    <name type="ordered locus">EcSMS35_3713</name>
</gene>
<protein>
    <recommendedName>
        <fullName evidence="1">Glycogen debranching enzyme</fullName>
        <ecNumber evidence="1">3.2.1.196</ecNumber>
    </recommendedName>
    <alternativeName>
        <fullName evidence="1">Limit dextrin alpha-1,6-maltotetraose-hydrolase</fullName>
    </alternativeName>
</protein>
<comment type="function">
    <text evidence="1">Removes maltotriose and maltotetraose chains that are attached by 1,6-alpha-linkage to the limit dextrin main chain, generating a debranched limit dextrin.</text>
</comment>
<comment type="catalytic activity">
    <reaction evidence="1">
        <text>Hydrolysis of (1-&gt;6)-alpha-D-glucosidic linkages to branches with degrees of polymerization of three or four glucose residues in limit dextrin.</text>
        <dbReference type="EC" id="3.2.1.196"/>
    </reaction>
</comment>
<comment type="pathway">
    <text evidence="1">Glycan degradation; glycogen degradation.</text>
</comment>
<comment type="similarity">
    <text evidence="1">Belongs to the glycosyl hydrolase 13 family.</text>
</comment>
<evidence type="ECO:0000255" key="1">
    <source>
        <dbReference type="HAMAP-Rule" id="MF_01248"/>
    </source>
</evidence>
<evidence type="ECO:0000256" key="2">
    <source>
        <dbReference type="SAM" id="MobiDB-lite"/>
    </source>
</evidence>
<organism>
    <name type="scientific">Escherichia coli (strain SMS-3-5 / SECEC)</name>
    <dbReference type="NCBI Taxonomy" id="439855"/>
    <lineage>
        <taxon>Bacteria</taxon>
        <taxon>Pseudomonadati</taxon>
        <taxon>Pseudomonadota</taxon>
        <taxon>Gammaproteobacteria</taxon>
        <taxon>Enterobacterales</taxon>
        <taxon>Enterobacteriaceae</taxon>
        <taxon>Escherichia</taxon>
    </lineage>
</organism>
<dbReference type="EC" id="3.2.1.196" evidence="1"/>
<dbReference type="EMBL" id="CP000970">
    <property type="protein sequence ID" value="ACB15699.1"/>
    <property type="molecule type" value="Genomic_DNA"/>
</dbReference>
<dbReference type="RefSeq" id="WP_000192569.1">
    <property type="nucleotide sequence ID" value="NC_010498.1"/>
</dbReference>
<dbReference type="SMR" id="B1LI92"/>
<dbReference type="CAZy" id="CBM48">
    <property type="family name" value="Carbohydrate-Binding Module Family 48"/>
</dbReference>
<dbReference type="CAZy" id="GH13">
    <property type="family name" value="Glycoside Hydrolase Family 13"/>
</dbReference>
<dbReference type="KEGG" id="ecm:EcSMS35_3713"/>
<dbReference type="HOGENOM" id="CLU_011725_1_1_6"/>
<dbReference type="UniPathway" id="UPA00165"/>
<dbReference type="Proteomes" id="UP000007011">
    <property type="component" value="Chromosome"/>
</dbReference>
<dbReference type="GO" id="GO:0004133">
    <property type="term" value="F:glycogen debranching enzyme activity"/>
    <property type="evidence" value="ECO:0007669"/>
    <property type="project" value="UniProtKB-UniRule"/>
</dbReference>
<dbReference type="GO" id="GO:0004553">
    <property type="term" value="F:hydrolase activity, hydrolyzing O-glycosyl compounds"/>
    <property type="evidence" value="ECO:0007669"/>
    <property type="project" value="InterPro"/>
</dbReference>
<dbReference type="GO" id="GO:0005980">
    <property type="term" value="P:glycogen catabolic process"/>
    <property type="evidence" value="ECO:0007669"/>
    <property type="project" value="UniProtKB-UniRule"/>
</dbReference>
<dbReference type="CDD" id="cd11326">
    <property type="entry name" value="AmyAc_Glg_debranch"/>
    <property type="match status" value="1"/>
</dbReference>
<dbReference type="CDD" id="cd02856">
    <property type="entry name" value="E_set_GDE_Isoamylase_N"/>
    <property type="match status" value="1"/>
</dbReference>
<dbReference type="FunFam" id="2.60.40.10:FF:000468">
    <property type="entry name" value="Glycogen debranching enzyme"/>
    <property type="match status" value="1"/>
</dbReference>
<dbReference type="FunFam" id="3.20.20.80:FF:000031">
    <property type="entry name" value="Glycogen debranching enzyme"/>
    <property type="match status" value="1"/>
</dbReference>
<dbReference type="Gene3D" id="3.20.20.80">
    <property type="entry name" value="Glycosidases"/>
    <property type="match status" value="1"/>
</dbReference>
<dbReference type="Gene3D" id="2.60.40.1180">
    <property type="entry name" value="Golgi alpha-mannosidase II"/>
    <property type="match status" value="1"/>
</dbReference>
<dbReference type="Gene3D" id="2.60.40.10">
    <property type="entry name" value="Immunoglobulins"/>
    <property type="match status" value="1"/>
</dbReference>
<dbReference type="HAMAP" id="MF_01248">
    <property type="entry name" value="GlgX"/>
    <property type="match status" value="1"/>
</dbReference>
<dbReference type="InterPro" id="IPR040784">
    <property type="entry name" value="GlgX_C"/>
</dbReference>
<dbReference type="InterPro" id="IPR044505">
    <property type="entry name" value="GlgX_Isoamylase_N_E_set"/>
</dbReference>
<dbReference type="InterPro" id="IPR006047">
    <property type="entry name" value="Glyco_hydro_13_cat_dom"/>
</dbReference>
<dbReference type="InterPro" id="IPR004193">
    <property type="entry name" value="Glyco_hydro_13_N"/>
</dbReference>
<dbReference type="InterPro" id="IPR013780">
    <property type="entry name" value="Glyco_hydro_b"/>
</dbReference>
<dbReference type="InterPro" id="IPR022844">
    <property type="entry name" value="Glycogen_debranch_bac"/>
</dbReference>
<dbReference type="InterPro" id="IPR011837">
    <property type="entry name" value="Glycogen_debranch_GlgX"/>
</dbReference>
<dbReference type="InterPro" id="IPR017853">
    <property type="entry name" value="Glycoside_hydrolase_SF"/>
</dbReference>
<dbReference type="InterPro" id="IPR013783">
    <property type="entry name" value="Ig-like_fold"/>
</dbReference>
<dbReference type="InterPro" id="IPR014756">
    <property type="entry name" value="Ig_E-set"/>
</dbReference>
<dbReference type="NCBIfam" id="TIGR02100">
    <property type="entry name" value="glgX_debranch"/>
    <property type="match status" value="1"/>
</dbReference>
<dbReference type="NCBIfam" id="NF002983">
    <property type="entry name" value="PRK03705.1"/>
    <property type="match status" value="1"/>
</dbReference>
<dbReference type="PANTHER" id="PTHR43002">
    <property type="entry name" value="GLYCOGEN DEBRANCHING ENZYME"/>
    <property type="match status" value="1"/>
</dbReference>
<dbReference type="Pfam" id="PF00128">
    <property type="entry name" value="Alpha-amylase"/>
    <property type="match status" value="1"/>
</dbReference>
<dbReference type="Pfam" id="PF02922">
    <property type="entry name" value="CBM_48"/>
    <property type="match status" value="1"/>
</dbReference>
<dbReference type="Pfam" id="PF18390">
    <property type="entry name" value="GlgX_C"/>
    <property type="match status" value="1"/>
</dbReference>
<dbReference type="SMART" id="SM00642">
    <property type="entry name" value="Aamy"/>
    <property type="match status" value="1"/>
</dbReference>
<dbReference type="SUPFAM" id="SSF51445">
    <property type="entry name" value="(Trans)glycosidases"/>
    <property type="match status" value="1"/>
</dbReference>
<dbReference type="SUPFAM" id="SSF81296">
    <property type="entry name" value="E set domains"/>
    <property type="match status" value="1"/>
</dbReference>
<feature type="chain" id="PRO_1000139870" description="Glycogen debranching enzyme">
    <location>
        <begin position="1"/>
        <end position="657"/>
    </location>
</feature>
<feature type="region of interest" description="Disordered" evidence="2">
    <location>
        <begin position="460"/>
        <end position="479"/>
    </location>
</feature>
<feature type="active site" description="Nucleophile" evidence="1">
    <location>
        <position position="336"/>
    </location>
</feature>
<feature type="active site" description="Proton donor" evidence="1">
    <location>
        <position position="371"/>
    </location>
</feature>
<feature type="site" description="Transition state stabilizer" evidence="1">
    <location>
        <position position="443"/>
    </location>
</feature>
<sequence>MTQLAIGKPTPLGAHYDGQGVNFTLFSAHAERVELCVFDANGQEHRYDLPGHSGDIWHGYLPDARPGLRYGYRVHGPWQPAEGHRFNPAKLLIDPCARQIDGEFKDNPLLHAGHNEPDYRDNAAIAPKCVVVVDHYDWEDDAPPRTPWGSTIIYEAHVKGLTYLHPEIPVEIRGTYKALGHPVMINYLKQLGITALELLPVAQFASEPRLQRMGLSNYWGYNPVAMFALHPAYACSPETALDEFRDAIKALHKAGIEVILDIVLNHSAELDLDGPLFSLRGIDNRSYYWIREDGDYHNWTGCGNTLNLSHPAVVDYASACLRYWVETCHVDGFRFDLAAVMGRTPEFRQDAPLFTAIQNCPVLSQVKLIAEPWDIAPGGYQVGNFPPLFAEWNDHFRDAARRFWLHYDLPLGAFAGRFAASSDVFKRNDRLPSAAINLVTAHDGFTLRDCVCFNHKHNEANGEENRDGTNNNYSNNHGKEGLGGTLDLVERRRDSIHALLTTLLLSQGTPMLLAGDEHGHSQHGNNNAYCQDNQLTWLDWSQASSGLTAFTAALIHLRKRIPALVENRWWEEGDGNVRWLNRYAQPLSTDEWQNGPKQLQILLSDRFLIAINATLEVTEIVLPAGEWHAIPPFAGEDNPVITAVWQGPAHGLCVFQR</sequence>